<keyword id="KW-0131">Cell cycle</keyword>
<keyword id="KW-0132">Cell division</keyword>
<keyword id="KW-1185">Reference proteome</keyword>
<keyword id="KW-0717">Septation</keyword>
<evidence type="ECO:0000255" key="1">
    <source>
        <dbReference type="HAMAP-Rule" id="MF_00267"/>
    </source>
</evidence>
<evidence type="ECO:0000256" key="2">
    <source>
        <dbReference type="SAM" id="MobiDB-lite"/>
    </source>
</evidence>
<sequence>MSLKKSPFFELRSGSVDTLLFIVKTADLDALRAELVKRFEATPEFFADDVVAIDVRRLADHERVPLDDIRGMLNDVRMRAIGVVAQPEQHAWAASAGLPLLEARDRRAPSSKAADEAPVQQAEPAAPAAGQAALFEQAGPTLADAGAPPESPAPAVAAQSATLVVDRPLRSGQQIYAKGDLVVLGPVSYGAEVIAEGNIHIYAPLRGRALAGVHGNHDARIFCTCLEPELISIAGIYRTTENPLPADVLGKSVQIRLEQEKLMIEPLRLT</sequence>
<comment type="function">
    <text evidence="1">Cell division inhibitor that blocks the formation of polar Z ring septums. Rapidly oscillates between the poles of the cell to destabilize FtsZ filaments that have formed before they mature into polar Z rings. Prevents FtsZ polymerization.</text>
</comment>
<comment type="subunit">
    <text evidence="1">Interacts with MinD and FtsZ.</text>
</comment>
<comment type="similarity">
    <text evidence="1">Belongs to the MinC family.</text>
</comment>
<feature type="chain" id="PRO_1000047817" description="Probable septum site-determining protein MinC">
    <location>
        <begin position="1"/>
        <end position="270"/>
    </location>
</feature>
<feature type="region of interest" description="Disordered" evidence="2">
    <location>
        <begin position="105"/>
        <end position="129"/>
    </location>
</feature>
<feature type="compositionally biased region" description="Low complexity" evidence="2">
    <location>
        <begin position="116"/>
        <end position="129"/>
    </location>
</feature>
<name>MINC_BURPS</name>
<gene>
    <name evidence="1" type="primary">minC</name>
    <name type="ordered locus">BPSL2597</name>
</gene>
<dbReference type="EMBL" id="BX571965">
    <property type="protein sequence ID" value="CAH36605.1"/>
    <property type="molecule type" value="Genomic_DNA"/>
</dbReference>
<dbReference type="RefSeq" id="WP_004522312.1">
    <property type="nucleotide sequence ID" value="NZ_CP009538.1"/>
</dbReference>
<dbReference type="RefSeq" id="YP_109193.1">
    <property type="nucleotide sequence ID" value="NC_006350.1"/>
</dbReference>
<dbReference type="SMR" id="Q63RS4"/>
<dbReference type="STRING" id="272560.BPSL2597"/>
<dbReference type="GeneID" id="93061172"/>
<dbReference type="KEGG" id="bps:BPSL2597"/>
<dbReference type="PATRIC" id="fig|272560.51.peg.2760"/>
<dbReference type="eggNOG" id="COG0850">
    <property type="taxonomic scope" value="Bacteria"/>
</dbReference>
<dbReference type="Proteomes" id="UP000000605">
    <property type="component" value="Chromosome 1"/>
</dbReference>
<dbReference type="GO" id="GO:0000902">
    <property type="term" value="P:cell morphogenesis"/>
    <property type="evidence" value="ECO:0007669"/>
    <property type="project" value="InterPro"/>
</dbReference>
<dbReference type="GO" id="GO:0000917">
    <property type="term" value="P:division septum assembly"/>
    <property type="evidence" value="ECO:0007669"/>
    <property type="project" value="UniProtKB-KW"/>
</dbReference>
<dbReference type="GO" id="GO:0051302">
    <property type="term" value="P:regulation of cell division"/>
    <property type="evidence" value="ECO:0007669"/>
    <property type="project" value="InterPro"/>
</dbReference>
<dbReference type="GO" id="GO:1901891">
    <property type="term" value="P:regulation of cell septum assembly"/>
    <property type="evidence" value="ECO:0007669"/>
    <property type="project" value="InterPro"/>
</dbReference>
<dbReference type="Gene3D" id="2.160.20.70">
    <property type="match status" value="1"/>
</dbReference>
<dbReference type="Gene3D" id="3.30.70.260">
    <property type="match status" value="1"/>
</dbReference>
<dbReference type="HAMAP" id="MF_00267">
    <property type="entry name" value="MinC"/>
    <property type="match status" value="1"/>
</dbReference>
<dbReference type="InterPro" id="IPR016098">
    <property type="entry name" value="CAP/MinC_C"/>
</dbReference>
<dbReference type="InterPro" id="IPR013033">
    <property type="entry name" value="MinC"/>
</dbReference>
<dbReference type="InterPro" id="IPR036145">
    <property type="entry name" value="MinC_C_sf"/>
</dbReference>
<dbReference type="InterPro" id="IPR007874">
    <property type="entry name" value="MinC_N"/>
</dbReference>
<dbReference type="InterPro" id="IPR005526">
    <property type="entry name" value="Septum_form_inhib_MinC_C"/>
</dbReference>
<dbReference type="NCBIfam" id="TIGR01222">
    <property type="entry name" value="minC"/>
    <property type="match status" value="1"/>
</dbReference>
<dbReference type="PANTHER" id="PTHR34108">
    <property type="entry name" value="SEPTUM SITE-DETERMINING PROTEIN MINC"/>
    <property type="match status" value="1"/>
</dbReference>
<dbReference type="PANTHER" id="PTHR34108:SF1">
    <property type="entry name" value="SEPTUM SITE-DETERMINING PROTEIN MINC"/>
    <property type="match status" value="1"/>
</dbReference>
<dbReference type="Pfam" id="PF03775">
    <property type="entry name" value="MinC_C"/>
    <property type="match status" value="1"/>
</dbReference>
<dbReference type="Pfam" id="PF05209">
    <property type="entry name" value="MinC_N"/>
    <property type="match status" value="1"/>
</dbReference>
<dbReference type="SUPFAM" id="SSF63848">
    <property type="entry name" value="Cell-division inhibitor MinC, C-terminal domain"/>
    <property type="match status" value="1"/>
</dbReference>
<reference key="1">
    <citation type="journal article" date="2004" name="Proc. Natl. Acad. Sci. U.S.A.">
        <title>Genomic plasticity of the causative agent of melioidosis, Burkholderia pseudomallei.</title>
        <authorList>
            <person name="Holden M.T.G."/>
            <person name="Titball R.W."/>
            <person name="Peacock S.J."/>
            <person name="Cerdeno-Tarraga A.-M."/>
            <person name="Atkins T."/>
            <person name="Crossman L.C."/>
            <person name="Pitt T."/>
            <person name="Churcher C."/>
            <person name="Mungall K.L."/>
            <person name="Bentley S.D."/>
            <person name="Sebaihia M."/>
            <person name="Thomson N.R."/>
            <person name="Bason N."/>
            <person name="Beacham I.R."/>
            <person name="Brooks K."/>
            <person name="Brown K.A."/>
            <person name="Brown N.F."/>
            <person name="Challis G.L."/>
            <person name="Cherevach I."/>
            <person name="Chillingworth T."/>
            <person name="Cronin A."/>
            <person name="Crossett B."/>
            <person name="Davis P."/>
            <person name="DeShazer D."/>
            <person name="Feltwell T."/>
            <person name="Fraser A."/>
            <person name="Hance Z."/>
            <person name="Hauser H."/>
            <person name="Holroyd S."/>
            <person name="Jagels K."/>
            <person name="Keith K.E."/>
            <person name="Maddison M."/>
            <person name="Moule S."/>
            <person name="Price C."/>
            <person name="Quail M.A."/>
            <person name="Rabbinowitsch E."/>
            <person name="Rutherford K."/>
            <person name="Sanders M."/>
            <person name="Simmonds M."/>
            <person name="Songsivilai S."/>
            <person name="Stevens K."/>
            <person name="Tumapa S."/>
            <person name="Vesaratchavest M."/>
            <person name="Whitehead S."/>
            <person name="Yeats C."/>
            <person name="Barrell B.G."/>
            <person name="Oyston P.C.F."/>
            <person name="Parkhill J."/>
        </authorList>
    </citation>
    <scope>NUCLEOTIDE SEQUENCE [LARGE SCALE GENOMIC DNA]</scope>
    <source>
        <strain>K96243</strain>
    </source>
</reference>
<organism>
    <name type="scientific">Burkholderia pseudomallei (strain K96243)</name>
    <dbReference type="NCBI Taxonomy" id="272560"/>
    <lineage>
        <taxon>Bacteria</taxon>
        <taxon>Pseudomonadati</taxon>
        <taxon>Pseudomonadota</taxon>
        <taxon>Betaproteobacteria</taxon>
        <taxon>Burkholderiales</taxon>
        <taxon>Burkholderiaceae</taxon>
        <taxon>Burkholderia</taxon>
        <taxon>pseudomallei group</taxon>
    </lineage>
</organism>
<protein>
    <recommendedName>
        <fullName evidence="1">Probable septum site-determining protein MinC</fullName>
    </recommendedName>
</protein>
<accession>Q63RS4</accession>
<proteinExistence type="inferred from homology"/>